<gene>
    <name evidence="10" type="primary">atoh7-b</name>
    <name evidence="10" type="synonym">ath5-b</name>
</gene>
<dbReference type="EMBL" id="U93171">
    <property type="protein sequence ID" value="AAB58669.1"/>
    <property type="molecule type" value="mRNA"/>
</dbReference>
<dbReference type="RefSeq" id="NP_001079290.1">
    <property type="nucleotide sequence ID" value="NM_001085821.1"/>
</dbReference>
<dbReference type="SMR" id="O13126"/>
<dbReference type="GeneID" id="378577"/>
<dbReference type="KEGG" id="xla:378577"/>
<dbReference type="AGR" id="Xenbase:XB-GENE-989023"/>
<dbReference type="CTD" id="378577"/>
<dbReference type="Xenbase" id="XB-GENE-989023">
    <property type="gene designation" value="atoh7.L"/>
</dbReference>
<dbReference type="OrthoDB" id="6161578at2759"/>
<dbReference type="Proteomes" id="UP000186698">
    <property type="component" value="Chromosome 7L"/>
</dbReference>
<dbReference type="Bgee" id="378577">
    <property type="expression patterns" value="Expressed in heart and 3 other cell types or tissues"/>
</dbReference>
<dbReference type="GO" id="GO:0030424">
    <property type="term" value="C:axon"/>
    <property type="evidence" value="ECO:0000250"/>
    <property type="project" value="UniProtKB"/>
</dbReference>
<dbReference type="GO" id="GO:0005634">
    <property type="term" value="C:nucleus"/>
    <property type="evidence" value="ECO:0000250"/>
    <property type="project" value="UniProtKB"/>
</dbReference>
<dbReference type="GO" id="GO:0043204">
    <property type="term" value="C:perikaryon"/>
    <property type="evidence" value="ECO:0000250"/>
    <property type="project" value="UniProtKB"/>
</dbReference>
<dbReference type="GO" id="GO:0000981">
    <property type="term" value="F:DNA-binding transcription factor activity, RNA polymerase II-specific"/>
    <property type="evidence" value="ECO:0000318"/>
    <property type="project" value="GO_Central"/>
</dbReference>
<dbReference type="GO" id="GO:0070888">
    <property type="term" value="F:E-box binding"/>
    <property type="evidence" value="ECO:0000318"/>
    <property type="project" value="GO_Central"/>
</dbReference>
<dbReference type="GO" id="GO:0046983">
    <property type="term" value="F:protein dimerization activity"/>
    <property type="evidence" value="ECO:0007669"/>
    <property type="project" value="InterPro"/>
</dbReference>
<dbReference type="GO" id="GO:0000976">
    <property type="term" value="F:transcription cis-regulatory region binding"/>
    <property type="evidence" value="ECO:0000250"/>
    <property type="project" value="UniProtKB"/>
</dbReference>
<dbReference type="GO" id="GO:0061564">
    <property type="term" value="P:axon development"/>
    <property type="evidence" value="ECO:0000318"/>
    <property type="project" value="GO_Central"/>
</dbReference>
<dbReference type="GO" id="GO:0003407">
    <property type="term" value="P:neural retina development"/>
    <property type="evidence" value="ECO:0007669"/>
    <property type="project" value="InterPro"/>
</dbReference>
<dbReference type="GO" id="GO:0048663">
    <property type="term" value="P:neuron fate commitment"/>
    <property type="evidence" value="ECO:0000318"/>
    <property type="project" value="GO_Central"/>
</dbReference>
<dbReference type="GO" id="GO:1902336">
    <property type="term" value="P:positive regulation of retinal ganglion cell axon guidance"/>
    <property type="evidence" value="ECO:0000250"/>
    <property type="project" value="UniProtKB"/>
</dbReference>
<dbReference type="GO" id="GO:0045944">
    <property type="term" value="P:positive regulation of transcription by RNA polymerase II"/>
    <property type="evidence" value="ECO:0000318"/>
    <property type="project" value="GO_Central"/>
</dbReference>
<dbReference type="GO" id="GO:0006357">
    <property type="term" value="P:regulation of transcription by RNA polymerase II"/>
    <property type="evidence" value="ECO:0000250"/>
    <property type="project" value="UniProtKB"/>
</dbReference>
<dbReference type="GO" id="GO:0007423">
    <property type="term" value="P:sensory organ development"/>
    <property type="evidence" value="ECO:0000318"/>
    <property type="project" value="GO_Central"/>
</dbReference>
<dbReference type="CDD" id="cd19714">
    <property type="entry name" value="bHLH_TS_ATOH7"/>
    <property type="match status" value="1"/>
</dbReference>
<dbReference type="FunFam" id="4.10.280.10:FF:000025">
    <property type="entry name" value="protein atonal homolog 7"/>
    <property type="match status" value="1"/>
</dbReference>
<dbReference type="Gene3D" id="4.10.280.10">
    <property type="entry name" value="Helix-loop-helix DNA-binding domain"/>
    <property type="match status" value="1"/>
</dbReference>
<dbReference type="InterPro" id="IPR032663">
    <property type="entry name" value="ATOH7_bHLH"/>
</dbReference>
<dbReference type="InterPro" id="IPR011598">
    <property type="entry name" value="bHLH_dom"/>
</dbReference>
<dbReference type="InterPro" id="IPR050359">
    <property type="entry name" value="bHLH_transcription_factors"/>
</dbReference>
<dbReference type="InterPro" id="IPR036638">
    <property type="entry name" value="HLH_DNA-bd_sf"/>
</dbReference>
<dbReference type="PANTHER" id="PTHR19290">
    <property type="entry name" value="BASIC HELIX-LOOP-HELIX PROTEIN NEUROGENIN-RELATED"/>
    <property type="match status" value="1"/>
</dbReference>
<dbReference type="PANTHER" id="PTHR19290:SF162">
    <property type="entry name" value="TRANSCRIPTION FACTOR ATOH7"/>
    <property type="match status" value="1"/>
</dbReference>
<dbReference type="Pfam" id="PF00010">
    <property type="entry name" value="HLH"/>
    <property type="match status" value="1"/>
</dbReference>
<dbReference type="SMART" id="SM00353">
    <property type="entry name" value="HLH"/>
    <property type="match status" value="1"/>
</dbReference>
<dbReference type="SUPFAM" id="SSF47459">
    <property type="entry name" value="HLH, helix-loop-helix DNA-binding domain"/>
    <property type="match status" value="1"/>
</dbReference>
<dbReference type="PROSITE" id="PS50888">
    <property type="entry name" value="BHLH"/>
    <property type="match status" value="1"/>
</dbReference>
<name>ATO7B_XENLA</name>
<feature type="chain" id="PRO_0000292410" description="Transcription factor Atoh7-b">
    <location>
        <begin position="1"/>
        <end position="138"/>
    </location>
</feature>
<feature type="domain" description="bHLH" evidence="3">
    <location>
        <begin position="33"/>
        <end position="85"/>
    </location>
</feature>
<comment type="function">
    <text evidence="2 4 5 6 7">Transcription factor that binds to DNA at the consensus sequence 5'-CAG[GC]TG-3' (By similarity). Positively regulates the determination of retinal ganglion cell fate and formation of the optic nerve and retino-hypothalamic tract (PubMed:9390513). Required for retinal circadian rhythm photoentrainment (By similarity). Plays a role in brainstem auditory signaling and binaural processing (By similarity). Regulates the differentiation of olfactory receptor neurons (PubMed:12454929). During retinal neurogenesis, activates the transcription of several genes such as brn3d, coe3, cbfa2t2, glis2, elrC and xgadd45-gamma (PubMed:11401395, PubMed:16112102).</text>
</comment>
<comment type="subcellular location">
    <subcellularLocation>
        <location evidence="1">Nucleus</location>
    </subcellularLocation>
    <subcellularLocation>
        <location evidence="2">Perikaryon</location>
    </subcellularLocation>
    <subcellularLocation>
        <location evidence="2">Cell projection</location>
        <location evidence="2">Axon</location>
    </subcellularLocation>
</comment>
<comment type="developmental stage">
    <text evidence="4 5 7">First detected at stage 17 as two symmetric patches in the region of the presumptive olfactory placode. Expressed in the pineal at stage 23, and in the eye starting from stage 24. By stage 27, strongly expressed in retina, olfactory placodes and pineal. At stage 32, expression strongly decreases in olfactory placodes and pineal but is maintained in the neuroretina. At stage 41, expression is restricted to the ciliary marginal zone of the retina.</text>
</comment>
<comment type="induction">
    <text>Inhibited by Notch and ESR1.</text>
</comment>
<accession>O13126</accession>
<protein>
    <recommendedName>
        <fullName evidence="2">Transcription factor Atoh7-b</fullName>
    </recommendedName>
    <alternativeName>
        <fullName evidence="2">Atonal bHLH transcription factor 7-B</fullName>
    </alternativeName>
    <alternativeName>
        <fullName evidence="8">Helix-loop-helix protein xATH-5-B</fullName>
    </alternativeName>
    <alternativeName>
        <fullName evidence="9">Protein atonal homolog 5-B</fullName>
        <shortName evidence="9">xAth5-B</shortName>
    </alternativeName>
    <alternativeName>
        <fullName>Protein atonal homolog 7-B</fullName>
    </alternativeName>
</protein>
<sequence>MKSDSPVHGESHTECQSPCPLSCMPARLEGSTKRRLAANARERRRMQGLNTAFDSLRKVVPQWGEDKKLSKYETLQMALSYIMALSRILTEAERYSRTDPGEWTKMHFDHIQEEQCLSYMGVRCPRDCDRYLPQTFSH</sequence>
<evidence type="ECO:0000250" key="1">
    <source>
        <dbReference type="UniProtKB" id="Q8N100"/>
    </source>
</evidence>
<evidence type="ECO:0000250" key="2">
    <source>
        <dbReference type="UniProtKB" id="Q9Z2E5"/>
    </source>
</evidence>
<evidence type="ECO:0000255" key="3">
    <source>
        <dbReference type="PROSITE-ProRule" id="PRU00981"/>
    </source>
</evidence>
<evidence type="ECO:0000269" key="4">
    <source>
    </source>
</evidence>
<evidence type="ECO:0000269" key="5">
    <source>
    </source>
</evidence>
<evidence type="ECO:0000269" key="6">
    <source>
    </source>
</evidence>
<evidence type="ECO:0000269" key="7">
    <source>
    </source>
</evidence>
<evidence type="ECO:0000303" key="8">
    <source>
    </source>
</evidence>
<evidence type="ECO:0000303" key="9">
    <source>
    </source>
</evidence>
<evidence type="ECO:0000305" key="10"/>
<keyword id="KW-0966">Cell projection</keyword>
<keyword id="KW-0217">Developmental protein</keyword>
<keyword id="KW-0221">Differentiation</keyword>
<keyword id="KW-0238">DNA-binding</keyword>
<keyword id="KW-0524">Neurogenesis</keyword>
<keyword id="KW-0539">Nucleus</keyword>
<keyword id="KW-1185">Reference proteome</keyword>
<keyword id="KW-0804">Transcription</keyword>
<keyword id="KW-0805">Transcription regulation</keyword>
<organism>
    <name type="scientific">Xenopus laevis</name>
    <name type="common">African clawed frog</name>
    <dbReference type="NCBI Taxonomy" id="8355"/>
    <lineage>
        <taxon>Eukaryota</taxon>
        <taxon>Metazoa</taxon>
        <taxon>Chordata</taxon>
        <taxon>Craniata</taxon>
        <taxon>Vertebrata</taxon>
        <taxon>Euteleostomi</taxon>
        <taxon>Amphibia</taxon>
        <taxon>Batrachia</taxon>
        <taxon>Anura</taxon>
        <taxon>Pipoidea</taxon>
        <taxon>Pipidae</taxon>
        <taxon>Xenopodinae</taxon>
        <taxon>Xenopus</taxon>
        <taxon>Xenopus</taxon>
    </lineage>
</organism>
<reference key="1">
    <citation type="journal article" date="1997" name="Neuron">
        <title>Xath5 participates in a network of bHLH genes in the developing Xenopus retina.</title>
        <authorList>
            <person name="Kanekar S."/>
            <person name="Perron M."/>
            <person name="Dorsky R."/>
            <person name="Harris W.A."/>
            <person name="Jan L.Y."/>
            <person name="Jan Y.N."/>
            <person name="Vetter M.L."/>
        </authorList>
    </citation>
    <scope>NUCLEOTIDE SEQUENCE [MRNA]</scope>
    <scope>DEVELOPMENTAL STAGE</scope>
    <scope>FUNCTION IN RETINA DEVELOPMENT</scope>
    <source>
        <tissue>Head</tissue>
    </source>
</reference>
<reference key="2">
    <citation type="journal article" date="1997" name="Neuron">
        <authorList>
            <person name="Kanekar S."/>
            <person name="Perron M."/>
            <person name="Dorsky R."/>
            <person name="Harris W.A."/>
            <person name="Jan L.Y."/>
            <person name="Jan Y.N."/>
            <person name="Vetter M.L."/>
        </authorList>
    </citation>
    <scope>ERRATUM OF PUBMED:9390513</scope>
</reference>
<reference key="3">
    <citation type="journal article" date="2001" name="Dev. Biol.">
        <title>The bHLH factors Xath5 and XNeuroD can upregulate the expression of XBrn3d, a POU-homeodomain transcription factor.</title>
        <authorList>
            <person name="Hutcheson D.A."/>
            <person name="Vetter M.L."/>
        </authorList>
    </citation>
    <scope>DEVELOPMENTAL STAGE</scope>
    <scope>FUNCTION</scope>
</reference>
<reference key="4">
    <citation type="journal article" date="2001" name="Mol. Cell. Neurosci.">
        <title>Notch signaling can inhibit Xath5 function in the neural plate and developing retina.</title>
        <authorList>
            <person name="Schneider M.L."/>
            <person name="Turner D.L."/>
            <person name="Vetter M.L."/>
        </authorList>
    </citation>
    <scope>INHIBITION BY NOTCH AND ESR1</scope>
</reference>
<reference key="5">
    <citation type="journal article" date="2002" name="Dev. Dyn.">
        <title>Xath5 regulates neurogenesis in the Xenopus olfactory placode.</title>
        <authorList>
            <person name="Burns C.J."/>
            <person name="Vetter M.L."/>
        </authorList>
    </citation>
    <scope>FUNCTION IN OLFACTORY NEURON DEVELOPMENT</scope>
    <scope>DEVELOPMENTAL STAGE</scope>
</reference>
<reference key="6">
    <citation type="journal article" date="2005" name="Dev. Biol.">
        <title>Identification of shared transcriptional targets for the proneural bHLH factors Xath5 and XNeuroD.</title>
        <authorList>
            <person name="Logan M.A."/>
            <person name="Steele M.R."/>
            <person name="Van Raay T.J."/>
            <person name="Vetter M.L."/>
        </authorList>
    </citation>
    <scope>FUNCTION</scope>
</reference>
<proteinExistence type="evidence at protein level"/>